<sequence length="321" mass="34107">MSDFSFSPFESISGYILNPLENAMNTTVSGLSSAISAPLNLASIIFIFLYGYNVMTGRVSLSMHSLLNNVVKIVVVTAMATNADTFNTYVKDIFFGDLANAIGNALNSNPASANVFDYILLKTSARYQEVLAAAWFLEKIMVGLLGSLMIMAVIVFCIGGFIVQMFAQVALVMIIGLGPLFISLYLFNATRKFTDAWITTLINFTILQVLVIMLGTIMCKIILHVLNGTYDSIYFLFPPVVVISIVGAILFRALPGIASALSSGGPYFNAGISSGGQIFTMLSSGAKTGRNAAKSAASTLSGTAGAAAKVAKIGDRGRGRF</sequence>
<accession>Q6FYW5</accession>
<accession>Q4L2Q7</accession>
<accession>Q8KPE7</accession>
<comment type="function">
    <text>Component of the type IV secretion system VirB/VirD4 which could be a major virulence determinant for subversion of human endothelial cell (HEC) function.</text>
</comment>
<comment type="subcellular location">
    <subcellularLocation>
        <location evidence="2">Cell inner membrane</location>
        <topology evidence="2">Multi-pass membrane protein</topology>
    </subcellularLocation>
</comment>
<comment type="similarity">
    <text evidence="2">Belongs to the TrbL/VirB6 family.</text>
</comment>
<comment type="sequence caution" evidence="2">
    <conflict type="frameshift">
        <sequence resource="EMBL-CDS" id="AAM82168"/>
    </conflict>
</comment>
<reference key="1">
    <citation type="submission" date="2002-06" db="EMBL/GenBank/DDBJ databases">
        <title>Evolution of type IV secretion systems in Bartonella: horizontal transmission and gene conversion.</title>
        <authorList>
            <person name="Alsmark U.C.M."/>
            <person name="Frank A.C."/>
            <person name="Thollesson M."/>
            <person name="Andersson S.G.E."/>
        </authorList>
    </citation>
    <scope>NUCLEOTIDE SEQUENCE [GENOMIC DNA]</scope>
    <source>
        <strain>Toulouse</strain>
    </source>
</reference>
<reference key="2">
    <citation type="submission" date="2003-01" db="EMBL/GenBank/DDBJ databases">
        <title>Genes composing the virB operon of Bartonella quintana.</title>
        <authorList>
            <person name="Kohlhorst D.E."/>
            <person name="Soni T."/>
            <person name="Baumstark B.R."/>
        </authorList>
    </citation>
    <scope>NUCLEOTIDE SEQUENCE [GENOMIC DNA]</scope>
    <source>
        <strain>ATCC VR-358 / Fuller / CIP 107027</strain>
    </source>
</reference>
<reference key="3">
    <citation type="journal article" date="2004" name="Proc. Natl. Acad. Sci. U.S.A.">
        <title>The louse-borne human pathogen Bartonella quintana is a genomic derivative of the zoonotic agent Bartonella henselae.</title>
        <authorList>
            <person name="Alsmark U.C.M."/>
            <person name="Frank A.C."/>
            <person name="Karlberg E.O."/>
            <person name="Legault B.-A."/>
            <person name="Ardell D.H."/>
            <person name="Canbaeck B."/>
            <person name="Eriksson A.-S."/>
            <person name="Naeslund A.K."/>
            <person name="Handley S.A."/>
            <person name="Huvet M."/>
            <person name="La Scola B."/>
            <person name="Holmberg M."/>
            <person name="Andersson S.G.E."/>
        </authorList>
    </citation>
    <scope>NUCLEOTIDE SEQUENCE [LARGE SCALE GENOMIC DNA]</scope>
    <scope>POSSIBLE FUNCTION</scope>
    <source>
        <strain>Toulouse</strain>
    </source>
</reference>
<gene>
    <name type="primary">virB6</name>
    <name type="ordered locus">BQ10570</name>
</gene>
<name>VIRB6_BARQU</name>
<feature type="chain" id="PRO_0000281415" description="Type IV secretion system protein VirB6">
    <location>
        <begin position="1"/>
        <end position="321"/>
    </location>
</feature>
<feature type="transmembrane region" description="Helical" evidence="1">
    <location>
        <begin position="30"/>
        <end position="50"/>
    </location>
</feature>
<feature type="transmembrane region" description="Helical" evidence="1">
    <location>
        <begin position="59"/>
        <end position="79"/>
    </location>
</feature>
<feature type="transmembrane region" description="Helical" evidence="1">
    <location>
        <begin position="142"/>
        <end position="162"/>
    </location>
</feature>
<feature type="transmembrane region" description="Helical" evidence="1">
    <location>
        <begin position="169"/>
        <end position="189"/>
    </location>
</feature>
<feature type="transmembrane region" description="Helical" evidence="1">
    <location>
        <begin position="206"/>
        <end position="226"/>
    </location>
</feature>
<feature type="transmembrane region" description="Helical" evidence="1">
    <location>
        <begin position="231"/>
        <end position="251"/>
    </location>
</feature>
<feature type="sequence variant" description="In strain: ATCC VR-358 / Fuller / CIP 107027.">
    <original>F</original>
    <variation>FSFSP</variation>
    <location>
        <position position="4"/>
    </location>
</feature>
<organism>
    <name type="scientific">Bartonella quintana (strain Toulouse)</name>
    <name type="common">Rochalimaea quintana</name>
    <dbReference type="NCBI Taxonomy" id="283165"/>
    <lineage>
        <taxon>Bacteria</taxon>
        <taxon>Pseudomonadati</taxon>
        <taxon>Pseudomonadota</taxon>
        <taxon>Alphaproteobacteria</taxon>
        <taxon>Hyphomicrobiales</taxon>
        <taxon>Bartonellaceae</taxon>
        <taxon>Bartonella</taxon>
    </lineage>
</organism>
<dbReference type="EMBL" id="AY122055">
    <property type="protein sequence ID" value="AAM82239.1"/>
    <property type="molecule type" value="Genomic_DNA"/>
</dbReference>
<dbReference type="EMBL" id="AY216720">
    <property type="protein sequence ID" value="AAM82168.2"/>
    <property type="status" value="ALT_FRAME"/>
    <property type="molecule type" value="Genomic_DNA"/>
</dbReference>
<dbReference type="EMBL" id="BX897700">
    <property type="protein sequence ID" value="CAF26524.1"/>
    <property type="molecule type" value="Genomic_DNA"/>
</dbReference>
<dbReference type="RefSeq" id="WP_011179728.1">
    <property type="nucleotide sequence ID" value="NC_005955.1"/>
</dbReference>
<dbReference type="SMR" id="Q6FYW5"/>
<dbReference type="GeneID" id="56533401"/>
<dbReference type="KEGG" id="bqu:BQ10570"/>
<dbReference type="eggNOG" id="COG3704">
    <property type="taxonomic scope" value="Bacteria"/>
</dbReference>
<dbReference type="HOGENOM" id="CLU_065797_1_0_5"/>
<dbReference type="OrthoDB" id="7854576at2"/>
<dbReference type="Proteomes" id="UP000000597">
    <property type="component" value="Chromosome"/>
</dbReference>
<dbReference type="GO" id="GO:0005886">
    <property type="term" value="C:plasma membrane"/>
    <property type="evidence" value="ECO:0007669"/>
    <property type="project" value="UniProtKB-SubCell"/>
</dbReference>
<dbReference type="GO" id="GO:0030255">
    <property type="term" value="P:protein secretion by the type IV secretion system"/>
    <property type="evidence" value="ECO:0007669"/>
    <property type="project" value="InterPro"/>
</dbReference>
<dbReference type="InterPro" id="IPR007688">
    <property type="entry name" value="Conjugal_tfr_TrbL/VirB6"/>
</dbReference>
<dbReference type="Pfam" id="PF04610">
    <property type="entry name" value="TrbL"/>
    <property type="match status" value="1"/>
</dbReference>
<evidence type="ECO:0000255" key="1"/>
<evidence type="ECO:0000305" key="2"/>
<protein>
    <recommendedName>
        <fullName>Type IV secretion system protein VirB6</fullName>
    </recommendedName>
</protein>
<proteinExistence type="inferred from homology"/>
<keyword id="KW-0997">Cell inner membrane</keyword>
<keyword id="KW-1003">Cell membrane</keyword>
<keyword id="KW-0472">Membrane</keyword>
<keyword id="KW-0812">Transmembrane</keyword>
<keyword id="KW-1133">Transmembrane helix</keyword>
<keyword id="KW-0813">Transport</keyword>
<keyword id="KW-0843">Virulence</keyword>